<name>PANB2_ORYSJ</name>
<keyword id="KW-0460">Magnesium</keyword>
<keyword id="KW-0479">Metal-binding</keyword>
<keyword id="KW-0496">Mitochondrion</keyword>
<keyword id="KW-0566">Pantothenate biosynthesis</keyword>
<keyword id="KW-1185">Reference proteome</keyword>
<keyword id="KW-0808">Transferase</keyword>
<keyword id="KW-0809">Transit peptide</keyword>
<proteinExistence type="inferred from homology"/>
<protein>
    <recommendedName>
        <fullName>3-methyl-2-oxobutanoate hydroxymethyltransferase 2, mitochondrial</fullName>
        <ecNumber>2.1.2.11</ecNumber>
    </recommendedName>
    <alternativeName>
        <fullName>Ketopantoate hydroxymethyltransferase 2</fullName>
    </alternativeName>
</protein>
<gene>
    <name type="primary">KPHMT2</name>
    <name type="synonym">PANB2</name>
    <name type="ordered locus">Os01g0225500</name>
    <name type="ordered locus">LOC_Os01g12570</name>
    <name type="ORF">P0443E07.7</name>
    <name type="ORF">P0492F05.16</name>
</gene>
<reference key="1">
    <citation type="journal article" date="2002" name="Nature">
        <title>The genome sequence and structure of rice chromosome 1.</title>
        <authorList>
            <person name="Sasaki T."/>
            <person name="Matsumoto T."/>
            <person name="Yamamoto K."/>
            <person name="Sakata K."/>
            <person name="Baba T."/>
            <person name="Katayose Y."/>
            <person name="Wu J."/>
            <person name="Niimura Y."/>
            <person name="Cheng Z."/>
            <person name="Nagamura Y."/>
            <person name="Antonio B.A."/>
            <person name="Kanamori H."/>
            <person name="Hosokawa S."/>
            <person name="Masukawa M."/>
            <person name="Arikawa K."/>
            <person name="Chiden Y."/>
            <person name="Hayashi M."/>
            <person name="Okamoto M."/>
            <person name="Ando T."/>
            <person name="Aoki H."/>
            <person name="Arita K."/>
            <person name="Hamada M."/>
            <person name="Harada C."/>
            <person name="Hijishita S."/>
            <person name="Honda M."/>
            <person name="Ichikawa Y."/>
            <person name="Idonuma A."/>
            <person name="Iijima M."/>
            <person name="Ikeda M."/>
            <person name="Ikeno M."/>
            <person name="Ito S."/>
            <person name="Ito T."/>
            <person name="Ito Y."/>
            <person name="Ito Y."/>
            <person name="Iwabuchi A."/>
            <person name="Kamiya K."/>
            <person name="Karasawa W."/>
            <person name="Katagiri S."/>
            <person name="Kikuta A."/>
            <person name="Kobayashi N."/>
            <person name="Kono I."/>
            <person name="Machita K."/>
            <person name="Maehara T."/>
            <person name="Mizuno H."/>
            <person name="Mizubayashi T."/>
            <person name="Mukai Y."/>
            <person name="Nagasaki H."/>
            <person name="Nakashima M."/>
            <person name="Nakama Y."/>
            <person name="Nakamichi Y."/>
            <person name="Nakamura M."/>
            <person name="Namiki N."/>
            <person name="Negishi M."/>
            <person name="Ohta I."/>
            <person name="Ono N."/>
            <person name="Saji S."/>
            <person name="Sakai K."/>
            <person name="Shibata M."/>
            <person name="Shimokawa T."/>
            <person name="Shomura A."/>
            <person name="Song J."/>
            <person name="Takazaki Y."/>
            <person name="Terasawa K."/>
            <person name="Tsuji K."/>
            <person name="Waki K."/>
            <person name="Yamagata H."/>
            <person name="Yamane H."/>
            <person name="Yoshiki S."/>
            <person name="Yoshihara R."/>
            <person name="Yukawa K."/>
            <person name="Zhong H."/>
            <person name="Iwama H."/>
            <person name="Endo T."/>
            <person name="Ito H."/>
            <person name="Hahn J.H."/>
            <person name="Kim H.-I."/>
            <person name="Eun M.-Y."/>
            <person name="Yano M."/>
            <person name="Jiang J."/>
            <person name="Gojobori T."/>
        </authorList>
    </citation>
    <scope>NUCLEOTIDE SEQUENCE [LARGE SCALE GENOMIC DNA]</scope>
    <source>
        <strain>cv. Nipponbare</strain>
    </source>
</reference>
<reference key="2">
    <citation type="journal article" date="2005" name="Nature">
        <title>The map-based sequence of the rice genome.</title>
        <authorList>
            <consortium name="International rice genome sequencing project (IRGSP)"/>
        </authorList>
    </citation>
    <scope>NUCLEOTIDE SEQUENCE [LARGE SCALE GENOMIC DNA]</scope>
    <source>
        <strain>cv. Nipponbare</strain>
    </source>
</reference>
<reference key="3">
    <citation type="journal article" date="2008" name="Nucleic Acids Res.">
        <title>The rice annotation project database (RAP-DB): 2008 update.</title>
        <authorList>
            <consortium name="The rice annotation project (RAP)"/>
        </authorList>
    </citation>
    <scope>GENOME REANNOTATION</scope>
    <source>
        <strain>cv. Nipponbare</strain>
    </source>
</reference>
<reference key="4">
    <citation type="journal article" date="2013" name="Rice">
        <title>Improvement of the Oryza sativa Nipponbare reference genome using next generation sequence and optical map data.</title>
        <authorList>
            <person name="Kawahara Y."/>
            <person name="de la Bastide M."/>
            <person name="Hamilton J.P."/>
            <person name="Kanamori H."/>
            <person name="McCombie W.R."/>
            <person name="Ouyang S."/>
            <person name="Schwartz D.C."/>
            <person name="Tanaka T."/>
            <person name="Wu J."/>
            <person name="Zhou S."/>
            <person name="Childs K.L."/>
            <person name="Davidson R.M."/>
            <person name="Lin H."/>
            <person name="Quesada-Ocampo L."/>
            <person name="Vaillancourt B."/>
            <person name="Sakai H."/>
            <person name="Lee S.S."/>
            <person name="Kim J."/>
            <person name="Numa H."/>
            <person name="Itoh T."/>
            <person name="Buell C.R."/>
            <person name="Matsumoto T."/>
        </authorList>
    </citation>
    <scope>GENOME REANNOTATION</scope>
    <source>
        <strain>cv. Nipponbare</strain>
    </source>
</reference>
<evidence type="ECO:0000250" key="1"/>
<evidence type="ECO:0000255" key="2"/>
<evidence type="ECO:0000305" key="3"/>
<sequence length="399" mass="41233">MSFSRLLTPRILLDTTAVFPPSSSVVAPSLSRQLRCTRTGGSPPAPPHRLVARRAMSNGAAEPAIYGGGGGAQQAASSAAARRVTLATLRGKHRRGEPISMVTAYDYPSGVHVDAAGFDICLVGDSAAMVAHGHDNTLPISLDLMIEHCRAVARGAARTFLVGDLPFGSYEASTAQAVGSAVRVMKEGGVNSIKLEGSAPSRISAARAIVDAGIAVMGHIGLTPQSVSALGGFRPQGKTVESAVKVVEAALALQEAGCFAVVLECVPAPVAAAATSALTIPTIGIGAGPFCSGQVLVYHDLLGTFQTSHAKVSPKFCKQYGNIGDVINRALSKYKQEVETQSFPGPSHTPYKLAATDVDAFLNALKMKGLNVAADAAADAVEYTDEKEINGTPQLKVYA</sequence>
<accession>Q9AWZ7</accession>
<accession>A0A0P0UZU4</accession>
<dbReference type="EC" id="2.1.2.11"/>
<dbReference type="EMBL" id="AP002900">
    <property type="protein sequence ID" value="BAB92104.1"/>
    <property type="molecule type" value="Genomic_DNA"/>
</dbReference>
<dbReference type="EMBL" id="AP002902">
    <property type="protein sequence ID" value="BAB32713.1"/>
    <property type="molecule type" value="Genomic_DNA"/>
</dbReference>
<dbReference type="EMBL" id="AP008207">
    <property type="status" value="NOT_ANNOTATED_CDS"/>
    <property type="molecule type" value="Genomic_DNA"/>
</dbReference>
<dbReference type="EMBL" id="AP014957">
    <property type="protein sequence ID" value="BAS71111.1"/>
    <property type="molecule type" value="Genomic_DNA"/>
</dbReference>
<dbReference type="SMR" id="Q9AWZ7"/>
<dbReference type="FunCoup" id="Q9AWZ7">
    <property type="interactions" value="236"/>
</dbReference>
<dbReference type="STRING" id="39947.Q9AWZ7"/>
<dbReference type="PaxDb" id="39947-Q9AWZ7"/>
<dbReference type="EnsemblPlants" id="Os01t0225500-00">
    <property type="protein sequence ID" value="Os01t0225500-00"/>
    <property type="gene ID" value="Os01g0225500"/>
</dbReference>
<dbReference type="GeneID" id="107275880"/>
<dbReference type="Gramene" id="Os01t0225500-00">
    <property type="protein sequence ID" value="Os01t0225500-00"/>
    <property type="gene ID" value="Os01g0225500"/>
</dbReference>
<dbReference type="KEGG" id="osa:107275880"/>
<dbReference type="eggNOG" id="KOG2949">
    <property type="taxonomic scope" value="Eukaryota"/>
</dbReference>
<dbReference type="HOGENOM" id="CLU_036645_2_1_1"/>
<dbReference type="InParanoid" id="Q9AWZ7"/>
<dbReference type="OMA" id="ILVMNDM"/>
<dbReference type="OrthoDB" id="425211at2759"/>
<dbReference type="PlantReactome" id="R-OSA-1119496">
    <property type="pathway name" value="Pantothenate biosynthesis I"/>
</dbReference>
<dbReference type="PlantReactome" id="R-OSA-1119544">
    <property type="pathway name" value="Pantothenate biosynthesis II"/>
</dbReference>
<dbReference type="UniPathway" id="UPA00028">
    <property type="reaction ID" value="UER00003"/>
</dbReference>
<dbReference type="Proteomes" id="UP000000763">
    <property type="component" value="Chromosome 1"/>
</dbReference>
<dbReference type="Proteomes" id="UP000059680">
    <property type="component" value="Chromosome 1"/>
</dbReference>
<dbReference type="GO" id="GO:0005739">
    <property type="term" value="C:mitochondrion"/>
    <property type="evidence" value="ECO:0000318"/>
    <property type="project" value="GO_Central"/>
</dbReference>
<dbReference type="GO" id="GO:0003864">
    <property type="term" value="F:3-methyl-2-oxobutanoate hydroxymethyltransferase activity"/>
    <property type="evidence" value="ECO:0000318"/>
    <property type="project" value="GO_Central"/>
</dbReference>
<dbReference type="GO" id="GO:0000287">
    <property type="term" value="F:magnesium ion binding"/>
    <property type="evidence" value="ECO:0000318"/>
    <property type="project" value="GO_Central"/>
</dbReference>
<dbReference type="GO" id="GO:0015940">
    <property type="term" value="P:pantothenate biosynthetic process"/>
    <property type="evidence" value="ECO:0000318"/>
    <property type="project" value="GO_Central"/>
</dbReference>
<dbReference type="CDD" id="cd06557">
    <property type="entry name" value="KPHMT-like"/>
    <property type="match status" value="1"/>
</dbReference>
<dbReference type="FunFam" id="3.20.20.60:FF:000003">
    <property type="entry name" value="3-methyl-2-oxobutanoate hydroxymethyltransferase"/>
    <property type="match status" value="1"/>
</dbReference>
<dbReference type="Gene3D" id="3.20.20.60">
    <property type="entry name" value="Phosphoenolpyruvate-binding domains"/>
    <property type="match status" value="1"/>
</dbReference>
<dbReference type="HAMAP" id="MF_00156">
    <property type="entry name" value="PanB"/>
    <property type="match status" value="1"/>
</dbReference>
<dbReference type="InterPro" id="IPR003700">
    <property type="entry name" value="Pantoate_hydroxy_MeTrfase"/>
</dbReference>
<dbReference type="InterPro" id="IPR015813">
    <property type="entry name" value="Pyrv/PenolPyrv_kinase-like_dom"/>
</dbReference>
<dbReference type="InterPro" id="IPR040442">
    <property type="entry name" value="Pyrv_kinase-like_dom_sf"/>
</dbReference>
<dbReference type="NCBIfam" id="TIGR00222">
    <property type="entry name" value="panB"/>
    <property type="match status" value="1"/>
</dbReference>
<dbReference type="NCBIfam" id="NF001452">
    <property type="entry name" value="PRK00311.1"/>
    <property type="match status" value="1"/>
</dbReference>
<dbReference type="PANTHER" id="PTHR20881">
    <property type="entry name" value="3-METHYL-2-OXOBUTANOATE HYDROXYMETHYLTRANSFERASE"/>
    <property type="match status" value="1"/>
</dbReference>
<dbReference type="PANTHER" id="PTHR20881:SF0">
    <property type="entry name" value="3-METHYL-2-OXOBUTANOATE HYDROXYMETHYLTRANSFERASE"/>
    <property type="match status" value="1"/>
</dbReference>
<dbReference type="Pfam" id="PF02548">
    <property type="entry name" value="Pantoate_transf"/>
    <property type="match status" value="1"/>
</dbReference>
<dbReference type="SUPFAM" id="SSF51621">
    <property type="entry name" value="Phosphoenolpyruvate/pyruvate domain"/>
    <property type="match status" value="1"/>
</dbReference>
<feature type="transit peptide" description="Mitochondrion" evidence="2">
    <location>
        <begin position="1"/>
        <end position="90"/>
    </location>
</feature>
<feature type="chain" id="PRO_0000429569" description="3-methyl-2-oxobutanoate hydroxymethyltransferase 2, mitochondrial">
    <location>
        <begin position="91"/>
        <end position="399"/>
    </location>
</feature>
<feature type="active site" description="Proton acceptor" evidence="1">
    <location>
        <position position="264"/>
    </location>
</feature>
<feature type="binding site" evidence="1">
    <location>
        <begin position="125"/>
        <end position="126"/>
    </location>
    <ligand>
        <name>3-methyl-2-oxobutanoate</name>
        <dbReference type="ChEBI" id="CHEBI:11851"/>
    </ligand>
</feature>
<feature type="binding site" evidence="1">
    <location>
        <position position="125"/>
    </location>
    <ligand>
        <name>Mg(2+)</name>
        <dbReference type="ChEBI" id="CHEBI:18420"/>
    </ligand>
</feature>
<feature type="binding site" evidence="1">
    <location>
        <position position="164"/>
    </location>
    <ligand>
        <name>3-methyl-2-oxobutanoate</name>
        <dbReference type="ChEBI" id="CHEBI:11851"/>
    </ligand>
</feature>
<feature type="binding site" evidence="1">
    <location>
        <position position="164"/>
    </location>
    <ligand>
        <name>Mg(2+)</name>
        <dbReference type="ChEBI" id="CHEBI:18420"/>
    </ligand>
</feature>
<feature type="binding site" evidence="1">
    <location>
        <position position="194"/>
    </location>
    <ligand>
        <name>3-methyl-2-oxobutanoate</name>
        <dbReference type="ChEBI" id="CHEBI:11851"/>
    </ligand>
</feature>
<feature type="binding site" evidence="1">
    <location>
        <position position="196"/>
    </location>
    <ligand>
        <name>Mg(2+)</name>
        <dbReference type="ChEBI" id="CHEBI:18420"/>
    </ligand>
</feature>
<organism>
    <name type="scientific">Oryza sativa subsp. japonica</name>
    <name type="common">Rice</name>
    <dbReference type="NCBI Taxonomy" id="39947"/>
    <lineage>
        <taxon>Eukaryota</taxon>
        <taxon>Viridiplantae</taxon>
        <taxon>Streptophyta</taxon>
        <taxon>Embryophyta</taxon>
        <taxon>Tracheophyta</taxon>
        <taxon>Spermatophyta</taxon>
        <taxon>Magnoliopsida</taxon>
        <taxon>Liliopsida</taxon>
        <taxon>Poales</taxon>
        <taxon>Poaceae</taxon>
        <taxon>BOP clade</taxon>
        <taxon>Oryzoideae</taxon>
        <taxon>Oryzeae</taxon>
        <taxon>Oryzinae</taxon>
        <taxon>Oryza</taxon>
        <taxon>Oryza sativa</taxon>
    </lineage>
</organism>
<comment type="function">
    <text evidence="1">Catalyzes the reversible reaction in which hydroxymethyl group from 5,10-methylenetetrahydrofolate is transferred onto alpha-ketoisovalerate to form ketopantoate.</text>
</comment>
<comment type="catalytic activity">
    <reaction>
        <text>3-methyl-2-oxobutanoate + (6R)-5,10-methylene-5,6,7,8-tetrahydrofolate + H2O = 2-dehydropantoate + (6S)-5,6,7,8-tetrahydrofolate</text>
        <dbReference type="Rhea" id="RHEA:11824"/>
        <dbReference type="ChEBI" id="CHEBI:11561"/>
        <dbReference type="ChEBI" id="CHEBI:11851"/>
        <dbReference type="ChEBI" id="CHEBI:15377"/>
        <dbReference type="ChEBI" id="CHEBI:15636"/>
        <dbReference type="ChEBI" id="CHEBI:57453"/>
        <dbReference type="EC" id="2.1.2.11"/>
    </reaction>
</comment>
<comment type="cofactor">
    <cofactor evidence="1">
        <name>Mg(2+)</name>
        <dbReference type="ChEBI" id="CHEBI:18420"/>
    </cofactor>
    <text evidence="1">Binds 1 Mg(2+) ion per subunit.</text>
</comment>
<comment type="pathway">
    <text>Cofactor biosynthesis; (R)-pantothenate biosynthesis; (R)-pantoate from 3-methyl-2-oxobutanoate: step 1/2.</text>
</comment>
<comment type="subcellular location">
    <subcellularLocation>
        <location evidence="1">Mitochondrion</location>
    </subcellularLocation>
</comment>
<comment type="similarity">
    <text evidence="3">Belongs to the PanB family.</text>
</comment>